<comment type="function">
    <text evidence="1">Catalyzes the pyruvoyl-dependent decarboxylation of aspartate to produce beta-alanine.</text>
</comment>
<comment type="catalytic activity">
    <reaction evidence="1">
        <text>L-aspartate + H(+) = beta-alanine + CO2</text>
        <dbReference type="Rhea" id="RHEA:19497"/>
        <dbReference type="ChEBI" id="CHEBI:15378"/>
        <dbReference type="ChEBI" id="CHEBI:16526"/>
        <dbReference type="ChEBI" id="CHEBI:29991"/>
        <dbReference type="ChEBI" id="CHEBI:57966"/>
        <dbReference type="EC" id="4.1.1.11"/>
    </reaction>
</comment>
<comment type="cofactor">
    <cofactor evidence="1">
        <name>pyruvate</name>
        <dbReference type="ChEBI" id="CHEBI:15361"/>
    </cofactor>
    <text evidence="1">Binds 1 pyruvoyl group covalently per subunit.</text>
</comment>
<comment type="pathway">
    <text evidence="1">Cofactor biosynthesis; (R)-pantothenate biosynthesis; beta-alanine from L-aspartate: step 1/1.</text>
</comment>
<comment type="subunit">
    <text evidence="1">Heterooctamer of four alpha and four beta subunits.</text>
</comment>
<comment type="subcellular location">
    <subcellularLocation>
        <location evidence="1">Cytoplasm</location>
    </subcellularLocation>
</comment>
<comment type="PTM">
    <text evidence="1">Is synthesized initially as an inactive proenzyme, which is activated by self-cleavage at a specific serine bond to produce a beta-subunit with a hydroxyl group at its C-terminus and an alpha-subunit with a pyruvoyl group at its N-terminus.</text>
</comment>
<comment type="similarity">
    <text evidence="1">Belongs to the PanD family.</text>
</comment>
<feature type="chain" id="PRO_0000307015" description="Aspartate 1-decarboxylase beta chain" evidence="1">
    <location>
        <begin position="1"/>
        <end position="24"/>
    </location>
</feature>
<feature type="chain" id="PRO_0000307016" description="Aspartate 1-decarboxylase alpha chain" evidence="1">
    <location>
        <begin position="25"/>
        <end position="126"/>
    </location>
</feature>
<feature type="active site" description="Schiff-base intermediate with substrate; via pyruvic acid" evidence="1">
    <location>
        <position position="25"/>
    </location>
</feature>
<feature type="active site" description="Proton donor" evidence="1">
    <location>
        <position position="58"/>
    </location>
</feature>
<feature type="binding site" evidence="1">
    <location>
        <position position="57"/>
    </location>
    <ligand>
        <name>substrate</name>
    </ligand>
</feature>
<feature type="binding site" evidence="1">
    <location>
        <begin position="73"/>
        <end position="75"/>
    </location>
    <ligand>
        <name>substrate</name>
    </ligand>
</feature>
<feature type="modified residue" description="Pyruvic acid (Ser)" evidence="1">
    <location>
        <position position="25"/>
    </location>
</feature>
<sequence length="126" mass="14137">MQRTMLKSKLHRVHVTHSELDYEGSCAIDEALLEAADIKEYQQIDIYNVNNGERFTTYAIRAERNSGIISVNGAAARKASPGDLLIIATYASYTEAELAQFKPQLVYVDADNRIKNQRQHIPVQAA</sequence>
<gene>
    <name evidence="1" type="primary">panD</name>
    <name type="ordered locus">Mfla_0594</name>
</gene>
<proteinExistence type="inferred from homology"/>
<organism>
    <name type="scientific">Methylobacillus flagellatus (strain ATCC 51484 / DSM 6875 / VKM B-1610 / KT)</name>
    <dbReference type="NCBI Taxonomy" id="265072"/>
    <lineage>
        <taxon>Bacteria</taxon>
        <taxon>Pseudomonadati</taxon>
        <taxon>Pseudomonadota</taxon>
        <taxon>Betaproteobacteria</taxon>
        <taxon>Nitrosomonadales</taxon>
        <taxon>Methylophilaceae</taxon>
        <taxon>Methylobacillus</taxon>
    </lineage>
</organism>
<reference key="1">
    <citation type="submission" date="2006-03" db="EMBL/GenBank/DDBJ databases">
        <title>Complete sequence of Methylobacillus flagellatus KT.</title>
        <authorList>
            <consortium name="US DOE Joint Genome Institute"/>
            <person name="Copeland A."/>
            <person name="Lucas S."/>
            <person name="Lapidus A."/>
            <person name="Barry K."/>
            <person name="Detter J.C."/>
            <person name="Glavina del Rio T."/>
            <person name="Hammon N."/>
            <person name="Israni S."/>
            <person name="Dalin E."/>
            <person name="Tice H."/>
            <person name="Pitluck S."/>
            <person name="Brettin T."/>
            <person name="Bruce D."/>
            <person name="Han C."/>
            <person name="Tapia R."/>
            <person name="Saunders E."/>
            <person name="Gilna P."/>
            <person name="Schmutz J."/>
            <person name="Larimer F."/>
            <person name="Land M."/>
            <person name="Kyrpides N."/>
            <person name="Anderson I."/>
            <person name="Richardson P."/>
        </authorList>
    </citation>
    <scope>NUCLEOTIDE SEQUENCE [LARGE SCALE GENOMIC DNA]</scope>
    <source>
        <strain>ATCC 51484 / DSM 6875 / VKM B-1610 / KT</strain>
    </source>
</reference>
<keyword id="KW-0068">Autocatalytic cleavage</keyword>
<keyword id="KW-0963">Cytoplasm</keyword>
<keyword id="KW-0210">Decarboxylase</keyword>
<keyword id="KW-0456">Lyase</keyword>
<keyword id="KW-0566">Pantothenate biosynthesis</keyword>
<keyword id="KW-0670">Pyruvate</keyword>
<keyword id="KW-1185">Reference proteome</keyword>
<keyword id="KW-0704">Schiff base</keyword>
<keyword id="KW-0865">Zymogen</keyword>
<evidence type="ECO:0000255" key="1">
    <source>
        <dbReference type="HAMAP-Rule" id="MF_00446"/>
    </source>
</evidence>
<name>PAND_METFK</name>
<dbReference type="EC" id="4.1.1.11" evidence="1"/>
<dbReference type="EMBL" id="CP000284">
    <property type="protein sequence ID" value="ABE48864.1"/>
    <property type="molecule type" value="Genomic_DNA"/>
</dbReference>
<dbReference type="RefSeq" id="WP_011478961.1">
    <property type="nucleotide sequence ID" value="NC_007947.1"/>
</dbReference>
<dbReference type="SMR" id="Q1H3S3"/>
<dbReference type="STRING" id="265072.Mfla_0594"/>
<dbReference type="KEGG" id="mfa:Mfla_0594"/>
<dbReference type="eggNOG" id="COG0853">
    <property type="taxonomic scope" value="Bacteria"/>
</dbReference>
<dbReference type="HOGENOM" id="CLU_115305_2_1_4"/>
<dbReference type="OrthoDB" id="9803983at2"/>
<dbReference type="UniPathway" id="UPA00028">
    <property type="reaction ID" value="UER00002"/>
</dbReference>
<dbReference type="Proteomes" id="UP000002440">
    <property type="component" value="Chromosome"/>
</dbReference>
<dbReference type="GO" id="GO:0005829">
    <property type="term" value="C:cytosol"/>
    <property type="evidence" value="ECO:0007669"/>
    <property type="project" value="TreeGrafter"/>
</dbReference>
<dbReference type="GO" id="GO:0004068">
    <property type="term" value="F:aspartate 1-decarboxylase activity"/>
    <property type="evidence" value="ECO:0007669"/>
    <property type="project" value="UniProtKB-UniRule"/>
</dbReference>
<dbReference type="GO" id="GO:0006523">
    <property type="term" value="P:alanine biosynthetic process"/>
    <property type="evidence" value="ECO:0007669"/>
    <property type="project" value="InterPro"/>
</dbReference>
<dbReference type="GO" id="GO:0015940">
    <property type="term" value="P:pantothenate biosynthetic process"/>
    <property type="evidence" value="ECO:0007669"/>
    <property type="project" value="UniProtKB-UniRule"/>
</dbReference>
<dbReference type="CDD" id="cd06919">
    <property type="entry name" value="Asp_decarbox"/>
    <property type="match status" value="1"/>
</dbReference>
<dbReference type="Gene3D" id="2.40.40.20">
    <property type="match status" value="1"/>
</dbReference>
<dbReference type="HAMAP" id="MF_00446">
    <property type="entry name" value="PanD"/>
    <property type="match status" value="1"/>
</dbReference>
<dbReference type="InterPro" id="IPR009010">
    <property type="entry name" value="Asp_de-COase-like_dom_sf"/>
</dbReference>
<dbReference type="InterPro" id="IPR003190">
    <property type="entry name" value="Asp_decarbox"/>
</dbReference>
<dbReference type="NCBIfam" id="TIGR00223">
    <property type="entry name" value="panD"/>
    <property type="match status" value="1"/>
</dbReference>
<dbReference type="PANTHER" id="PTHR21012">
    <property type="entry name" value="ASPARTATE 1-DECARBOXYLASE"/>
    <property type="match status" value="1"/>
</dbReference>
<dbReference type="PANTHER" id="PTHR21012:SF0">
    <property type="entry name" value="ASPARTATE 1-DECARBOXYLASE"/>
    <property type="match status" value="1"/>
</dbReference>
<dbReference type="Pfam" id="PF02261">
    <property type="entry name" value="Asp_decarbox"/>
    <property type="match status" value="1"/>
</dbReference>
<dbReference type="PIRSF" id="PIRSF006246">
    <property type="entry name" value="Asp_decarbox"/>
    <property type="match status" value="1"/>
</dbReference>
<dbReference type="SUPFAM" id="SSF50692">
    <property type="entry name" value="ADC-like"/>
    <property type="match status" value="1"/>
</dbReference>
<protein>
    <recommendedName>
        <fullName evidence="1">Aspartate 1-decarboxylase</fullName>
        <ecNumber evidence="1">4.1.1.11</ecNumber>
    </recommendedName>
    <alternativeName>
        <fullName evidence="1">Aspartate alpha-decarboxylase</fullName>
    </alternativeName>
    <component>
        <recommendedName>
            <fullName evidence="1">Aspartate 1-decarboxylase beta chain</fullName>
        </recommendedName>
    </component>
    <component>
        <recommendedName>
            <fullName evidence="1">Aspartate 1-decarboxylase alpha chain</fullName>
        </recommendedName>
    </component>
</protein>
<accession>Q1H3S3</accession>